<sequence length="392" mass="44649">MSLPLPPALSELARALPYSRTQWLPIFVGFLIGYPILIRALRYKRHGEMKKKFYFPTRESMAEMTDEEAFLIQKEMAQLEFPFMFLTSGQFALFRTYGIPTISHLLTKTGQFSKPETSFKRYTDTAALIGEMVENSPTSQRAFISVARTRFLHSGYQASGKILDADLLYTLALFAVQPVRFIENFEWRTLSDLELCAIGTFWKSLGDALGISSEILPSGKTGFKDGIQWLEEVDVWSQDYEAKYMVPDPKNRESADQATAMLISNRYEAPTPGWSMVFSTLLAIRKLILRYLSPPRPAALAVSNIAQKPDKDDRYHRMSWDALPFYIRPTFWNRWGPMAWISWLMGHPVPGDLGQKKGPQGDPGNDEGIKDLKDGEMSLPLVWSKYHATTND</sequence>
<accession>F1DBA8</accession>
<protein>
    <recommendedName>
        <fullName evidence="1">ER-bound oxygenase mpaB</fullName>
        <ecNumber evidence="1">1.-.-.-</ecNumber>
    </recommendedName>
    <alternativeName>
        <fullName evidence="4">Mycophenolic acid biosynthesis cluster protein B</fullName>
    </alternativeName>
</protein>
<organism>
    <name type="scientific">Penicillium brevicompactum</name>
    <dbReference type="NCBI Taxonomy" id="5074"/>
    <lineage>
        <taxon>Eukaryota</taxon>
        <taxon>Fungi</taxon>
        <taxon>Dikarya</taxon>
        <taxon>Ascomycota</taxon>
        <taxon>Pezizomycotina</taxon>
        <taxon>Eurotiomycetes</taxon>
        <taxon>Eurotiomycetidae</taxon>
        <taxon>Eurotiales</taxon>
        <taxon>Aspergillaceae</taxon>
        <taxon>Penicillium</taxon>
    </lineage>
</organism>
<proteinExistence type="inferred from homology"/>
<evidence type="ECO:0000250" key="1">
    <source>
        <dbReference type="UniProtKB" id="A0A0B5LB52"/>
    </source>
</evidence>
<evidence type="ECO:0000255" key="2"/>
<evidence type="ECO:0000256" key="3">
    <source>
        <dbReference type="SAM" id="MobiDB-lite"/>
    </source>
</evidence>
<evidence type="ECO:0000303" key="4">
    <source>
    </source>
</evidence>
<evidence type="ECO:0000305" key="5"/>
<evidence type="ECO:0000305" key="6">
    <source>
    </source>
</evidence>
<evidence type="ECO:0000305" key="7">
    <source>
    </source>
</evidence>
<feature type="chain" id="PRO_0000436571" description="ER-bound oxygenase mpaB">
    <location>
        <begin position="1"/>
        <end position="392"/>
    </location>
</feature>
<feature type="topological domain" description="Lumenal" evidence="5">
    <location>
        <begin position="1"/>
        <end position="21"/>
    </location>
</feature>
<feature type="transmembrane region" description="Helical" evidence="2">
    <location>
        <begin position="22"/>
        <end position="41"/>
    </location>
</feature>
<feature type="topological domain" description="Cytoplasmic" evidence="5">
    <location>
        <begin position="42"/>
        <end position="392"/>
    </location>
</feature>
<feature type="region of interest" description="Disordered" evidence="3">
    <location>
        <begin position="352"/>
        <end position="376"/>
    </location>
</feature>
<feature type="compositionally biased region" description="Basic and acidic residues" evidence="3">
    <location>
        <begin position="367"/>
        <end position="376"/>
    </location>
</feature>
<gene>
    <name evidence="4" type="primary">mpaB</name>
</gene>
<keyword id="KW-0256">Endoplasmic reticulum</keyword>
<keyword id="KW-0472">Membrane</keyword>
<keyword id="KW-0560">Oxidoreductase</keyword>
<keyword id="KW-0812">Transmembrane</keyword>
<keyword id="KW-1133">Transmembrane helix</keyword>
<reference key="1">
    <citation type="journal article" date="2011" name="Appl. Environ. Microbiol.">
        <title>Molecular basis for mycophenolic acid biosynthesis in Penicillium brevicompactum.</title>
        <authorList>
            <person name="Regueira T.B."/>
            <person name="Kildegaard K.R."/>
            <person name="Hansen B.G."/>
            <person name="Mortensen U.H."/>
            <person name="Hertweck C."/>
            <person name="Nielsen J."/>
        </authorList>
    </citation>
    <scope>NUCLEOTIDE SEQUENCE [GENOMIC DNA]</scope>
    <scope>FUNCTION</scope>
    <scope>PATHWAY</scope>
    <source>
        <strain>IBT 23078</strain>
    </source>
</reference>
<reference key="2">
    <citation type="journal article" date="2012" name="Appl. Environ. Microbiol.">
        <title>Involvement of a natural fusion of a cytochrome p450 and a hydrolase in mycophenolic acid biosynthesis.</title>
        <authorList>
            <person name="Hansen B.G."/>
            <person name="Mnich E."/>
            <person name="Nielsen K.F."/>
            <person name="Nielsen J.B."/>
            <person name="Nielsen M.T."/>
            <person name="Mortensen U.H."/>
            <person name="Larsen T.O."/>
            <person name="Patil K.R."/>
        </authorList>
    </citation>
    <scope>FUNCTION</scope>
    <source>
        <strain>IBT23078</strain>
    </source>
</reference>
<dbReference type="EC" id="1.-.-.-" evidence="1"/>
<dbReference type="EMBL" id="HQ731031">
    <property type="protein sequence ID" value="ADY00129.1"/>
    <property type="molecule type" value="Genomic_DNA"/>
</dbReference>
<dbReference type="SMR" id="F1DBA8"/>
<dbReference type="UniPathway" id="UPA00213"/>
<dbReference type="GO" id="GO:0005789">
    <property type="term" value="C:endoplasmic reticulum membrane"/>
    <property type="evidence" value="ECO:0000250"/>
    <property type="project" value="GO_Central"/>
</dbReference>
<dbReference type="GO" id="GO:0016491">
    <property type="term" value="F:oxidoreductase activity"/>
    <property type="evidence" value="ECO:0000250"/>
    <property type="project" value="GO_Central"/>
</dbReference>
<dbReference type="GO" id="GO:0140722">
    <property type="term" value="P:mycophenolic acid biosynthetic process"/>
    <property type="evidence" value="ECO:0000250"/>
    <property type="project" value="GO_Central"/>
</dbReference>
<dbReference type="GO" id="GO:0016114">
    <property type="term" value="P:terpenoid biosynthetic process"/>
    <property type="evidence" value="ECO:0007669"/>
    <property type="project" value="UniProtKB-UniPathway"/>
</dbReference>
<dbReference type="InterPro" id="IPR046366">
    <property type="entry name" value="MPAB"/>
</dbReference>
<dbReference type="PANTHER" id="PTHR36124">
    <property type="match status" value="1"/>
</dbReference>
<dbReference type="PANTHER" id="PTHR36124:SF1">
    <property type="entry name" value="ER-BOUND OXYGENASE MPAB_MPAB'_RUBBER OXYGENASE CATALYTIC DOMAIN-CONTAINING PROTEIN"/>
    <property type="match status" value="1"/>
</dbReference>
<name>MPAB_PENBR</name>
<comment type="function">
    <text evidence="1 6 7">ER-bound oxygenase; part of the gene cluster that mediates the biosynthesis of mycophenolic acid (MPA), the first isolated antibiotic natural product in the world obtained from a culture of Penicillium brevicompactum in 1893 (By similarity). MpaB catalyzes the oxidative cleavage the C19-C20 double bond in farnesyl-DHMP (FDHMP) to yield FDHMP-3C via a mycophenolic aldehyde intermediate (By similarity). The first step of the pathway is the synthesis of 5-methylorsellinic acid (5MOA) by the cytosolic polyketide synthase mpaC. 5MOA is then converted to the phthalide compound 5,7-dihydroxy-4,6-dimethylphthalide (DHMP) by the endoplasmic reticulum-bound cytochrome P450 monooxygenase mpaDE. MpaDE first catalyzes hydroxylation of 5-MOA to 4,6-dihydroxy-2-(hydroxymethyl)-3-methylbenzoic acid (DHMB). MpaDE then acts as a lactone synthase that catalyzes the ring closure to convert DHMB into DHMP. The next step is the prenylation of DHMP by the Golgi apparatus-associated prenyltransferase mpaA to yield farnesyl-DHMP (FDHMP). The ER-bound oxygenase mpaB then mediates the oxidative cleavage the C19-C20 double bond in FDHMP to yield FDHMP-3C via a mycophenolic aldehyde intermediate. The O-methyltransferase mpaG catalyzes the methylation of FDHMP-3C to yield MFDHMP-3C. After the cytosolic methylation of FDHMP-3C, MFDHMP-3C enters into peroxisomes probably via free diffusion due to its low molecular weight. Upon a peroxisomal CoA ligation reaction, catalyzed by a beta-oxidation component enzyme acyl-CoA ligase ACL891, MFDHMP-3C-CoA would then be restricted to peroxisomes for the following beta-oxidation pathway steps. The peroxisomal beta-oxidation machinery than converts MFDHMP-3C-CoA into MPA_CoA, via a beta-oxidation chain-shortening process. Finally mpaH acts as a peroxisomal acyl-CoA hydrolase with high substrate specificity toward MPA-CoA to release the final product MPA (Probable) (PubMed:21398490, PubMed:22544261).</text>
</comment>
<comment type="catalytic activity">
    <reaction evidence="1">
        <text>4-farnesyl-3,5-dihydroxy-6-methylphthalide + AH2 + 2 O2 = (4E,8E)-10-(4,6-dihydroxy-7-methyl-3-oxo-1,3-dihydro-2-benzofuran-5-yl)-4,8-dimethyldeca-4,8-dienoate + acetone + A + H2O + H(+)</text>
        <dbReference type="Rhea" id="RHEA:66688"/>
        <dbReference type="ChEBI" id="CHEBI:13193"/>
        <dbReference type="ChEBI" id="CHEBI:15347"/>
        <dbReference type="ChEBI" id="CHEBI:15377"/>
        <dbReference type="ChEBI" id="CHEBI:15378"/>
        <dbReference type="ChEBI" id="CHEBI:15379"/>
        <dbReference type="ChEBI" id="CHEBI:17499"/>
        <dbReference type="ChEBI" id="CHEBI:167386"/>
        <dbReference type="ChEBI" id="CHEBI:167389"/>
    </reaction>
    <physiologicalReaction direction="left-to-right" evidence="1">
        <dbReference type="Rhea" id="RHEA:66689"/>
    </physiologicalReaction>
</comment>
<comment type="pathway">
    <text evidence="6">Secondary metabolite biosynthesis; terpenoid biosynthesis.</text>
</comment>
<comment type="subcellular location">
    <subcellularLocation>
        <location evidence="1">Endoplasmic reticulum membrane</location>
        <topology evidence="2">Single-pass membrane protein</topology>
    </subcellularLocation>
</comment>
<comment type="similarity">
    <text evidence="5">Belongs to the mpaB oxygenase family.</text>
</comment>